<accession>Q7UA23</accession>
<proteinExistence type="inferred from homology"/>
<sequence>MPGPSDDPTEIALQGNLFSDAEPTVSATGVEPSTACEAFSDMELTADAASRPRRRAPADHNAADHDSNTDESSDNSDDPAWAHHSQVDPQQLTPMLRHYVELKAAHPERVLLYRLGDFFECFFEDAITLSRLLELTLTGKEGGKAVGRVPMAGIPHHAAERYCGELIRRGFSVALCDQLETTPAKGALLKRDITRVLTPGTVLEEGMLSSRRNNWLAAVVIEPAHRDEPFRWGLASADVSTGEVQVMQRQDSDALHQQLAQLGAAELLSSTPESNPAWCPDQLRLTSVASTPFSRPAAEAALLRHYKLANLDGLGLPELPLALRAMGGLLAYLRDTQPLEENASVPLEVPAIVQRGDALVLDAQTRRNLELTATQRDGSLQGSLLWAIDRTLTAMGGRCLRRWLEAPLMDLDAIRQRQQLVSTLVEQRNLRQALRRLLRPMGDLERLAGRAGAGHAGARDLVAIADGLERLPQLAARLEGTIIRGPDWLDDLLQPDPALQDLASSIRHTLLESPPLSLSEGGLIHDGVDPLLDGLRNQLDDQDAWLSQQEKQERQRSGNSNLRLQYHRTFGYFLAVSKAKASAVPDHWIRRQTLANEERFITPALKEREGRIFQLRARACQREYELFCTLREQVGALAASIRRAARAVAGLDALTGLADTAASGAYCAPELVEGRALSLSEARHPVVEQLLVETRFTANDVHLGSGTDLVVLTGPNASGKSCYLRQIGLIQLLAQIGSWVPAAKARIGIADRIFTRVGAVDDLAAGQSTFMVEMAETANILHHATELSLVLLDEIGRGTATFDGLSIAWAVSEHLAGDLRARTVFATHYHELNNLANERANVANFQVLVEETGDDLLFLHRVSQGGASRSYGIEAARLAGVPTPVVQRARQVLDQIEAAA</sequence>
<gene>
    <name evidence="1" type="primary">mutS</name>
    <name type="ordered locus">SYNW0078</name>
</gene>
<keyword id="KW-0067">ATP-binding</keyword>
<keyword id="KW-0227">DNA damage</keyword>
<keyword id="KW-0234">DNA repair</keyword>
<keyword id="KW-0238">DNA-binding</keyword>
<keyword id="KW-0547">Nucleotide-binding</keyword>
<name>MUTS_PARMW</name>
<protein>
    <recommendedName>
        <fullName evidence="1">DNA mismatch repair protein MutS</fullName>
    </recommendedName>
</protein>
<organism>
    <name type="scientific">Parasynechococcus marenigrum (strain WH8102)</name>
    <dbReference type="NCBI Taxonomy" id="84588"/>
    <lineage>
        <taxon>Bacteria</taxon>
        <taxon>Bacillati</taxon>
        <taxon>Cyanobacteriota</taxon>
        <taxon>Cyanophyceae</taxon>
        <taxon>Synechococcales</taxon>
        <taxon>Prochlorococcaceae</taxon>
        <taxon>Parasynechococcus</taxon>
        <taxon>Parasynechococcus marenigrum</taxon>
    </lineage>
</organism>
<feature type="chain" id="PRO_0000115154" description="DNA mismatch repair protein MutS">
    <location>
        <begin position="1"/>
        <end position="900"/>
    </location>
</feature>
<feature type="region of interest" description="Disordered" evidence="2">
    <location>
        <begin position="1"/>
        <end position="88"/>
    </location>
</feature>
<feature type="compositionally biased region" description="Basic and acidic residues" evidence="2">
    <location>
        <begin position="56"/>
        <end position="68"/>
    </location>
</feature>
<feature type="binding site" evidence="1">
    <location>
        <begin position="714"/>
        <end position="721"/>
    </location>
    <ligand>
        <name>ATP</name>
        <dbReference type="ChEBI" id="CHEBI:30616"/>
    </ligand>
</feature>
<dbReference type="EMBL" id="BX569689">
    <property type="protein sequence ID" value="CAE06593.1"/>
    <property type="molecule type" value="Genomic_DNA"/>
</dbReference>
<dbReference type="RefSeq" id="WP_011126956.1">
    <property type="nucleotide sequence ID" value="NC_005070.1"/>
</dbReference>
<dbReference type="SMR" id="Q7UA23"/>
<dbReference type="STRING" id="84588.SYNW0078"/>
<dbReference type="KEGG" id="syw:SYNW0078"/>
<dbReference type="eggNOG" id="COG0249">
    <property type="taxonomic scope" value="Bacteria"/>
</dbReference>
<dbReference type="HOGENOM" id="CLU_002472_1_3_3"/>
<dbReference type="Proteomes" id="UP000001422">
    <property type="component" value="Chromosome"/>
</dbReference>
<dbReference type="GO" id="GO:0005829">
    <property type="term" value="C:cytosol"/>
    <property type="evidence" value="ECO:0007669"/>
    <property type="project" value="TreeGrafter"/>
</dbReference>
<dbReference type="GO" id="GO:0005524">
    <property type="term" value="F:ATP binding"/>
    <property type="evidence" value="ECO:0007669"/>
    <property type="project" value="UniProtKB-UniRule"/>
</dbReference>
<dbReference type="GO" id="GO:0140664">
    <property type="term" value="F:ATP-dependent DNA damage sensor activity"/>
    <property type="evidence" value="ECO:0007669"/>
    <property type="project" value="InterPro"/>
</dbReference>
<dbReference type="GO" id="GO:0003684">
    <property type="term" value="F:damaged DNA binding"/>
    <property type="evidence" value="ECO:0007669"/>
    <property type="project" value="UniProtKB-UniRule"/>
</dbReference>
<dbReference type="GO" id="GO:0030983">
    <property type="term" value="F:mismatched DNA binding"/>
    <property type="evidence" value="ECO:0007669"/>
    <property type="project" value="InterPro"/>
</dbReference>
<dbReference type="GO" id="GO:0006298">
    <property type="term" value="P:mismatch repair"/>
    <property type="evidence" value="ECO:0007669"/>
    <property type="project" value="UniProtKB-UniRule"/>
</dbReference>
<dbReference type="CDD" id="cd03284">
    <property type="entry name" value="ABC_MutS1"/>
    <property type="match status" value="1"/>
</dbReference>
<dbReference type="FunFam" id="1.10.1420.10:FF:000001">
    <property type="entry name" value="DNA mismatch repair protein MutS"/>
    <property type="match status" value="1"/>
</dbReference>
<dbReference type="FunFam" id="3.40.50.300:FF:000870">
    <property type="entry name" value="MutS protein homolog 4"/>
    <property type="match status" value="1"/>
</dbReference>
<dbReference type="Gene3D" id="1.10.1420.10">
    <property type="match status" value="2"/>
</dbReference>
<dbReference type="Gene3D" id="3.40.1170.10">
    <property type="entry name" value="DNA repair protein MutS, domain I"/>
    <property type="match status" value="1"/>
</dbReference>
<dbReference type="Gene3D" id="3.30.420.110">
    <property type="entry name" value="MutS, connector domain"/>
    <property type="match status" value="1"/>
</dbReference>
<dbReference type="Gene3D" id="3.40.50.300">
    <property type="entry name" value="P-loop containing nucleotide triphosphate hydrolases"/>
    <property type="match status" value="1"/>
</dbReference>
<dbReference type="HAMAP" id="MF_00096">
    <property type="entry name" value="MutS"/>
    <property type="match status" value="1"/>
</dbReference>
<dbReference type="InterPro" id="IPR005748">
    <property type="entry name" value="DNA_mismatch_repair_MutS"/>
</dbReference>
<dbReference type="InterPro" id="IPR007695">
    <property type="entry name" value="DNA_mismatch_repair_MutS-lik_N"/>
</dbReference>
<dbReference type="InterPro" id="IPR017261">
    <property type="entry name" value="DNA_mismatch_repair_MutS/MSH"/>
</dbReference>
<dbReference type="InterPro" id="IPR000432">
    <property type="entry name" value="DNA_mismatch_repair_MutS_C"/>
</dbReference>
<dbReference type="InterPro" id="IPR007861">
    <property type="entry name" value="DNA_mismatch_repair_MutS_clamp"/>
</dbReference>
<dbReference type="InterPro" id="IPR007696">
    <property type="entry name" value="DNA_mismatch_repair_MutS_core"/>
</dbReference>
<dbReference type="InterPro" id="IPR016151">
    <property type="entry name" value="DNA_mismatch_repair_MutS_N"/>
</dbReference>
<dbReference type="InterPro" id="IPR036187">
    <property type="entry name" value="DNA_mismatch_repair_MutS_sf"/>
</dbReference>
<dbReference type="InterPro" id="IPR007860">
    <property type="entry name" value="DNA_mmatch_repair_MutS_con_dom"/>
</dbReference>
<dbReference type="InterPro" id="IPR045076">
    <property type="entry name" value="MutS"/>
</dbReference>
<dbReference type="InterPro" id="IPR036678">
    <property type="entry name" value="MutS_con_dom_sf"/>
</dbReference>
<dbReference type="InterPro" id="IPR027417">
    <property type="entry name" value="P-loop_NTPase"/>
</dbReference>
<dbReference type="NCBIfam" id="TIGR01070">
    <property type="entry name" value="mutS1"/>
    <property type="match status" value="1"/>
</dbReference>
<dbReference type="NCBIfam" id="NF003810">
    <property type="entry name" value="PRK05399.1"/>
    <property type="match status" value="1"/>
</dbReference>
<dbReference type="PANTHER" id="PTHR11361:SF34">
    <property type="entry name" value="DNA MISMATCH REPAIR PROTEIN MSH1, MITOCHONDRIAL"/>
    <property type="match status" value="1"/>
</dbReference>
<dbReference type="PANTHER" id="PTHR11361">
    <property type="entry name" value="DNA MISMATCH REPAIR PROTEIN MUTS FAMILY MEMBER"/>
    <property type="match status" value="1"/>
</dbReference>
<dbReference type="Pfam" id="PF01624">
    <property type="entry name" value="MutS_I"/>
    <property type="match status" value="1"/>
</dbReference>
<dbReference type="Pfam" id="PF05188">
    <property type="entry name" value="MutS_II"/>
    <property type="match status" value="1"/>
</dbReference>
<dbReference type="Pfam" id="PF05192">
    <property type="entry name" value="MutS_III"/>
    <property type="match status" value="1"/>
</dbReference>
<dbReference type="Pfam" id="PF05190">
    <property type="entry name" value="MutS_IV"/>
    <property type="match status" value="1"/>
</dbReference>
<dbReference type="Pfam" id="PF00488">
    <property type="entry name" value="MutS_V"/>
    <property type="match status" value="1"/>
</dbReference>
<dbReference type="PIRSF" id="PIRSF037677">
    <property type="entry name" value="DNA_mis_repair_Msh6"/>
    <property type="match status" value="1"/>
</dbReference>
<dbReference type="SMART" id="SM00534">
    <property type="entry name" value="MUTSac"/>
    <property type="match status" value="1"/>
</dbReference>
<dbReference type="SMART" id="SM00533">
    <property type="entry name" value="MUTSd"/>
    <property type="match status" value="1"/>
</dbReference>
<dbReference type="SUPFAM" id="SSF55271">
    <property type="entry name" value="DNA repair protein MutS, domain I"/>
    <property type="match status" value="1"/>
</dbReference>
<dbReference type="SUPFAM" id="SSF53150">
    <property type="entry name" value="DNA repair protein MutS, domain II"/>
    <property type="match status" value="1"/>
</dbReference>
<dbReference type="SUPFAM" id="SSF48334">
    <property type="entry name" value="DNA repair protein MutS, domain III"/>
    <property type="match status" value="1"/>
</dbReference>
<dbReference type="SUPFAM" id="SSF52540">
    <property type="entry name" value="P-loop containing nucleoside triphosphate hydrolases"/>
    <property type="match status" value="1"/>
</dbReference>
<dbReference type="PROSITE" id="PS00486">
    <property type="entry name" value="DNA_MISMATCH_REPAIR_2"/>
    <property type="match status" value="1"/>
</dbReference>
<evidence type="ECO:0000255" key="1">
    <source>
        <dbReference type="HAMAP-Rule" id="MF_00096"/>
    </source>
</evidence>
<evidence type="ECO:0000256" key="2">
    <source>
        <dbReference type="SAM" id="MobiDB-lite"/>
    </source>
</evidence>
<comment type="function">
    <text evidence="1">This protein is involved in the repair of mismatches in DNA. It is possible that it carries out the mismatch recognition step. This protein has a weak ATPase activity.</text>
</comment>
<comment type="similarity">
    <text evidence="1">Belongs to the DNA mismatch repair MutS family.</text>
</comment>
<reference key="1">
    <citation type="journal article" date="2003" name="Nature">
        <title>The genome of a motile marine Synechococcus.</title>
        <authorList>
            <person name="Palenik B."/>
            <person name="Brahamsha B."/>
            <person name="Larimer F.W."/>
            <person name="Land M.L."/>
            <person name="Hauser L."/>
            <person name="Chain P."/>
            <person name="Lamerdin J.E."/>
            <person name="Regala W."/>
            <person name="Allen E.E."/>
            <person name="McCarren J."/>
            <person name="Paulsen I.T."/>
            <person name="Dufresne A."/>
            <person name="Partensky F."/>
            <person name="Webb E.A."/>
            <person name="Waterbury J."/>
        </authorList>
    </citation>
    <scope>NUCLEOTIDE SEQUENCE [LARGE SCALE GENOMIC DNA]</scope>
    <source>
        <strain>WH8102</strain>
    </source>
</reference>